<organism>
    <name type="scientific">Influenza A virus (strain A/Chicken/Pennsylvania/1/1983 H5N2)</name>
    <dbReference type="NCBI Taxonomy" id="385586"/>
    <lineage>
        <taxon>Viruses</taxon>
        <taxon>Riboviria</taxon>
        <taxon>Orthornavirae</taxon>
        <taxon>Negarnaviricota</taxon>
        <taxon>Polyploviricotina</taxon>
        <taxon>Insthoviricetes</taxon>
        <taxon>Articulavirales</taxon>
        <taxon>Orthomyxoviridae</taxon>
        <taxon>Alphainfluenzavirus</taxon>
        <taxon>Alphainfluenzavirus influenzae</taxon>
        <taxon>Influenza A virus</taxon>
    </lineage>
</organism>
<name>PB2_I83A5</name>
<protein>
    <recommendedName>
        <fullName evidence="1">Polymerase basic protein 2</fullName>
    </recommendedName>
    <alternativeName>
        <fullName evidence="1">RNA-directed RNA polymerase subunit P3</fullName>
    </alternativeName>
</protein>
<accession>Q0A2H7</accession>
<reference key="1">
    <citation type="journal article" date="2006" name="Science">
        <title>Large-scale sequence analysis of avian influenza isolates.</title>
        <authorList>
            <person name="Obenauer J.C."/>
            <person name="Denson J."/>
            <person name="Mehta P.K."/>
            <person name="Su X."/>
            <person name="Mukatira S."/>
            <person name="Finkelstein D.B."/>
            <person name="Xu X."/>
            <person name="Wang J."/>
            <person name="Ma J."/>
            <person name="Fan Y."/>
            <person name="Rakestraw K.M."/>
            <person name="Webster R.G."/>
            <person name="Hoffmann E."/>
            <person name="Krauss S."/>
            <person name="Zheng J."/>
            <person name="Zhang Z."/>
            <person name="Naeve C.W."/>
        </authorList>
    </citation>
    <scope>NUCLEOTIDE SEQUENCE [GENOMIC RNA]</scope>
</reference>
<evidence type="ECO:0000255" key="1">
    <source>
        <dbReference type="HAMAP-Rule" id="MF_04062"/>
    </source>
</evidence>
<sequence length="759" mass="85823">MERIKELRDLMSQSRTREILTKTTVDHMAIIKKYTSGRQEKNPALRMKWMMAMKYPITADKRIMGMIPERNEQGQTLWSKTNDAGSDRVMVSPLAVTWWNRNGPTTSTIHYPKVYKTYFEKVERLKRGTFGPVHFRNQVKIRRRVDINPGHADLSAKEAQDVIMEVVFPNEVGARILTSESQLTITKEKREELQDCKIAPLMVAYMLERELVRKTRFLPVAGGTSSVYVEVLHLTQGTCWEQMYTPGGEVRNDDVDQSLIIAARNIVRRATVSADPLASLLEMCHSTQIGGIRMVDILRQNPTEEQAVDICKAAMGLRISSSFSFGGFTFKRTSGSSVKREEEVLTGNLQTLKLRVHEGYEEFTIVGRRATAILRKATRRLIQLIVSGRDEQSIAEAIIVAMVFSQEDCMIKAVRGDLNFVNRANQRLNPMHQLLRHFQKDAKVLFQNWGIEPIDNVMGMIGILPDMTPSTVMSMRGVRVSKMGVDEYSSTERVVVSIDRFLRVRDQRGNVLLSPEEVSEAQGTEKLTITYSSSMMWEINGPESVLINTYQWVIRNWETVKIQWSQDPTMLYNKMEFEPFQSLVPKAARGQYSGFVRTLFQQMRDVLGTFDTVQIIKLLPFAAAPPEQSRMQFSSLTVNVRGSGMRILVRGNSPVFNYNKATKRLTVLGKDAGALTEDPDEGTAGVESAVLRGFLILGKEDKRYGPALSINELSNLAKGEKANVLIGQGDVVLVMKRKRDSSILTDSQTATKRIRMAIN</sequence>
<feature type="chain" id="PRO_0000279624" description="Polymerase basic protein 2">
    <location>
        <begin position="1"/>
        <end position="759"/>
    </location>
</feature>
<feature type="short sequence motif" description="Nuclear localization signal" evidence="1">
    <location>
        <begin position="736"/>
        <end position="739"/>
    </location>
</feature>
<feature type="site" description="Avian adaptation" evidence="1">
    <location>
        <position position="627"/>
    </location>
</feature>
<gene>
    <name evidence="1" type="primary">PB2</name>
</gene>
<organismHost>
    <name type="scientific">Aves</name>
    <dbReference type="NCBI Taxonomy" id="8782"/>
</organismHost>
<keyword id="KW-1157">Cap snatching</keyword>
<keyword id="KW-1262">Eukaryotic host gene expression shutoff by virus</keyword>
<keyword id="KW-1191">Eukaryotic host transcription shutoff by virus</keyword>
<keyword id="KW-1190">Host gene expression shutoff by virus</keyword>
<keyword id="KW-1048">Host nucleus</keyword>
<keyword id="KW-0945">Host-virus interaction</keyword>
<keyword id="KW-1104">Inhibition of host RNA polymerase II by virus</keyword>
<keyword id="KW-0506">mRNA capping</keyword>
<keyword id="KW-0507">mRNA processing</keyword>
<keyword id="KW-1195">Viral transcription</keyword>
<keyword id="KW-0946">Virion</keyword>
<comment type="function">
    <text evidence="1">Plays an essential role in transcription initiation and cap-stealing mechanism, in which cellular capped pre-mRNAs are used to generate primers for viral transcription. Recognizes and binds the 7-methylguanosine-containing cap of the target pre-RNA which is subsequently cleaved after 10-13 nucleotides by the viral protein PA. Plays a role in the initiation of the viral genome replication and modulates the activity of the ribonucleoprotein (RNP) complex.</text>
</comment>
<comment type="subunit">
    <text evidence="1">Influenza RNA polymerase is composed of three subunits: PB1, PB2 and PA. Interacts (via N-terminus) with PB1 (via C-terminus). Interacts with nucleoprotein NP (via N-terminus).</text>
</comment>
<comment type="subcellular location">
    <subcellularLocation>
        <location evidence="1">Virion</location>
    </subcellularLocation>
    <subcellularLocation>
        <location evidence="1">Host nucleus</location>
    </subcellularLocation>
</comment>
<comment type="similarity">
    <text evidence="1">Belongs to the influenza viruses PB2 family.</text>
</comment>
<dbReference type="EMBL" id="CY015080">
    <property type="protein sequence ID" value="ABI85105.1"/>
    <property type="molecule type" value="Genomic_RNA"/>
</dbReference>
<dbReference type="SMR" id="Q0A2H7"/>
<dbReference type="PRO" id="PR:Q0A2H7"/>
<dbReference type="Proteomes" id="UP000008584">
    <property type="component" value="Genome"/>
</dbReference>
<dbReference type="GO" id="GO:0042025">
    <property type="term" value="C:host cell nucleus"/>
    <property type="evidence" value="ECO:0007669"/>
    <property type="project" value="UniProtKB-SubCell"/>
</dbReference>
<dbReference type="GO" id="GO:0044423">
    <property type="term" value="C:virion component"/>
    <property type="evidence" value="ECO:0007669"/>
    <property type="project" value="UniProtKB-UniRule"/>
</dbReference>
<dbReference type="GO" id="GO:0003723">
    <property type="term" value="F:RNA binding"/>
    <property type="evidence" value="ECO:0007669"/>
    <property type="project" value="UniProtKB-UniRule"/>
</dbReference>
<dbReference type="GO" id="GO:0003968">
    <property type="term" value="F:RNA-directed RNA polymerase activity"/>
    <property type="evidence" value="ECO:0007669"/>
    <property type="project" value="UniProtKB-UniRule"/>
</dbReference>
<dbReference type="GO" id="GO:0006370">
    <property type="term" value="P:7-methylguanosine mRNA capping"/>
    <property type="evidence" value="ECO:0007669"/>
    <property type="project" value="UniProtKB-UniRule"/>
</dbReference>
<dbReference type="GO" id="GO:0075526">
    <property type="term" value="P:cap snatching"/>
    <property type="evidence" value="ECO:0007669"/>
    <property type="project" value="UniProtKB-UniRule"/>
</dbReference>
<dbReference type="GO" id="GO:0006351">
    <property type="term" value="P:DNA-templated transcription"/>
    <property type="evidence" value="ECO:0007669"/>
    <property type="project" value="UniProtKB-UniRule"/>
</dbReference>
<dbReference type="GO" id="GO:0039657">
    <property type="term" value="P:symbiont-mediated suppression of host gene expression"/>
    <property type="evidence" value="ECO:0007669"/>
    <property type="project" value="UniProtKB-KW"/>
</dbReference>
<dbReference type="GO" id="GO:0039523">
    <property type="term" value="P:symbiont-mediated suppression of host mRNA transcription via inhibition of RNA polymerase II activity"/>
    <property type="evidence" value="ECO:0007669"/>
    <property type="project" value="UniProtKB-UniRule"/>
</dbReference>
<dbReference type="GO" id="GO:0039694">
    <property type="term" value="P:viral RNA genome replication"/>
    <property type="evidence" value="ECO:0007669"/>
    <property type="project" value="InterPro"/>
</dbReference>
<dbReference type="FunFam" id="3.30.30.90:FF:000001">
    <property type="entry name" value="Polymerase basic protein 2"/>
    <property type="match status" value="1"/>
</dbReference>
<dbReference type="Gene3D" id="3.30.30.90">
    <property type="entry name" value="Polymerase Basic Protein 2, C-terminal domain"/>
    <property type="match status" value="1"/>
</dbReference>
<dbReference type="HAMAP" id="MF_04062">
    <property type="entry name" value="INV_PB2"/>
    <property type="match status" value="1"/>
</dbReference>
<dbReference type="InterPro" id="IPR049110">
    <property type="entry name" value="Flu_PB2_2nd"/>
</dbReference>
<dbReference type="InterPro" id="IPR049114">
    <property type="entry name" value="Flu_PB2_6th"/>
</dbReference>
<dbReference type="InterPro" id="IPR049115">
    <property type="entry name" value="Flu_PB2_C"/>
</dbReference>
<dbReference type="InterPro" id="IPR048298">
    <property type="entry name" value="Flu_PB2_CAP-bd"/>
</dbReference>
<dbReference type="InterPro" id="IPR049111">
    <property type="entry name" value="Flu_PB2_middle"/>
</dbReference>
<dbReference type="InterPro" id="IPR049106">
    <property type="entry name" value="Flu_PB2_N"/>
</dbReference>
<dbReference type="InterPro" id="IPR001591">
    <property type="entry name" value="INV_PB2"/>
</dbReference>
<dbReference type="InterPro" id="IPR049113">
    <property type="entry name" value="PB2_helical"/>
</dbReference>
<dbReference type="InterPro" id="IPR037258">
    <property type="entry name" value="PDB2_C"/>
</dbReference>
<dbReference type="Pfam" id="PF20947">
    <property type="entry name" value="Flu_PB2_1st"/>
    <property type="match status" value="1"/>
</dbReference>
<dbReference type="Pfam" id="PF20948">
    <property type="entry name" value="Flu_PB2_2nd"/>
    <property type="match status" value="1"/>
</dbReference>
<dbReference type="Pfam" id="PF20949">
    <property type="entry name" value="Flu_PB2_3rd"/>
    <property type="match status" value="1"/>
</dbReference>
<dbReference type="Pfam" id="PF20950">
    <property type="entry name" value="Flu_PB2_4th"/>
    <property type="match status" value="1"/>
</dbReference>
<dbReference type="Pfam" id="PF00604">
    <property type="entry name" value="Flu_PB2_5th"/>
    <property type="match status" value="1"/>
</dbReference>
<dbReference type="Pfam" id="PF20951">
    <property type="entry name" value="Flu_PB2_6th"/>
    <property type="match status" value="1"/>
</dbReference>
<dbReference type="Pfam" id="PF20952">
    <property type="entry name" value="Flu_PB2_7th"/>
    <property type="match status" value="1"/>
</dbReference>
<dbReference type="SUPFAM" id="SSF160453">
    <property type="entry name" value="PB2 C-terminal domain-like"/>
    <property type="match status" value="1"/>
</dbReference>
<proteinExistence type="inferred from homology"/>